<accession>Q12164</accession>
<accession>D6VXY1</accession>
<protein>
    <recommendedName>
        <fullName>Pore membrane protein of 33 kDa</fullName>
    </recommendedName>
</protein>
<evidence type="ECO:0000255" key="1"/>
<evidence type="ECO:0000269" key="2">
    <source>
    </source>
</evidence>
<evidence type="ECO:0000269" key="3">
    <source>
    </source>
</evidence>
<evidence type="ECO:0000305" key="4"/>
<gene>
    <name type="primary">POM33</name>
    <name type="ordered locus">YLL023C</name>
    <name type="ORF">L1201</name>
</gene>
<sequence length="279" mass="32186">MSSRPANNQGPPNLPARDKSLVQRFMAVAKSLQFAWFTGHSVVLISSILYLLKMSEFYYRSAYLGVIESFGIIIYQQFFTRNEPLQTQDAAATKASIKSRVAGLLKSEDVLYLVLANFWLFTPRFSFSLIPFFAFAVFHVLIYVEKVLLPKVFHLSSKDSSKILSFIDKFVVQYNDLCMHWVGTAELLIFILVLFRAILCFQRSWIILVVYAIFIKLRYENSKYMKAAFAQWRVRMDGIISHPSIPPFVKRAYNAIKMSLIRLSEYRLSGAPQVTKKQN</sequence>
<name>POM33_YEAST</name>
<organism>
    <name type="scientific">Saccharomyces cerevisiae (strain ATCC 204508 / S288c)</name>
    <name type="common">Baker's yeast</name>
    <dbReference type="NCBI Taxonomy" id="559292"/>
    <lineage>
        <taxon>Eukaryota</taxon>
        <taxon>Fungi</taxon>
        <taxon>Dikarya</taxon>
        <taxon>Ascomycota</taxon>
        <taxon>Saccharomycotina</taxon>
        <taxon>Saccharomycetes</taxon>
        <taxon>Saccharomycetales</taxon>
        <taxon>Saccharomycetaceae</taxon>
        <taxon>Saccharomyces</taxon>
    </lineage>
</organism>
<comment type="function">
    <text evidence="3">Contributes to proper distribution and/or efficient assembly of nuclear pores. Required for normal pore density in the daughter nucleus during telophase.</text>
</comment>
<comment type="subunit">
    <text evidence="3">Interacts with RTN1.</text>
</comment>
<comment type="interaction">
    <interactant intactId="EBI-30000">
        <id>Q12164</id>
    </interactant>
    <interactant intactId="EBI-24460">
        <id>P32793</id>
        <label>YSC84</label>
    </interactant>
    <organismsDiffer>false</organismsDiffer>
    <experiments>2</experiments>
</comment>
<comment type="subcellular location">
    <subcellularLocation>
        <location>Endoplasmic reticulum membrane</location>
        <topology>Multi-pass membrane protein</topology>
    </subcellularLocation>
    <subcellularLocation>
        <location>Nucleus</location>
        <location>Nuclear pore complex</location>
    </subcellularLocation>
</comment>
<comment type="miscellaneous">
    <text evidence="2">Present with 1680 molecules/cell in log phase SD medium.</text>
</comment>
<comment type="similarity">
    <text evidence="4">Belongs to the PER33/POM33 family.</text>
</comment>
<keyword id="KW-0256">Endoplasmic reticulum</keyword>
<keyword id="KW-0472">Membrane</keyword>
<keyword id="KW-0509">mRNA transport</keyword>
<keyword id="KW-0906">Nuclear pore complex</keyword>
<keyword id="KW-0539">Nucleus</keyword>
<keyword id="KW-0653">Protein transport</keyword>
<keyword id="KW-1185">Reference proteome</keyword>
<keyword id="KW-0811">Translocation</keyword>
<keyword id="KW-0812">Transmembrane</keyword>
<keyword id="KW-1133">Transmembrane helix</keyword>
<keyword id="KW-0813">Transport</keyword>
<proteinExistence type="evidence at protein level"/>
<feature type="chain" id="PRO_0000247116" description="Pore membrane protein of 33 kDa">
    <location>
        <begin position="1"/>
        <end position="279"/>
    </location>
</feature>
<feature type="topological domain" description="Lumenal" evidence="1">
    <location>
        <begin position="1"/>
        <end position="31"/>
    </location>
</feature>
<feature type="transmembrane region" description="Helical" evidence="1">
    <location>
        <begin position="32"/>
        <end position="52"/>
    </location>
</feature>
<feature type="topological domain" description="Cytoplasmic" evidence="1">
    <location>
        <begin position="53"/>
        <end position="56"/>
    </location>
</feature>
<feature type="transmembrane region" description="Helical" evidence="1">
    <location>
        <begin position="57"/>
        <end position="79"/>
    </location>
</feature>
<feature type="topological domain" description="Lumenal" evidence="1">
    <location>
        <begin position="80"/>
        <end position="124"/>
    </location>
</feature>
<feature type="transmembrane region" description="Helical" evidence="1">
    <location>
        <begin position="125"/>
        <end position="145"/>
    </location>
</feature>
<feature type="topological domain" description="Cytoplasmic" evidence="1">
    <location>
        <begin position="146"/>
        <end position="180"/>
    </location>
</feature>
<feature type="transmembrane region" description="Helical" evidence="1">
    <location>
        <begin position="181"/>
        <end position="201"/>
    </location>
</feature>
<feature type="topological domain" description="Lumenal" evidence="1">
    <location>
        <begin position="202"/>
        <end position="203"/>
    </location>
</feature>
<feature type="transmembrane region" description="Helical" evidence="1">
    <location>
        <begin position="204"/>
        <end position="221"/>
    </location>
</feature>
<feature type="topological domain" description="Cytoplasmic" evidence="1">
    <location>
        <begin position="222"/>
        <end position="279"/>
    </location>
</feature>
<reference key="1">
    <citation type="journal article" date="1997" name="Yeast">
        <title>The sequence of 32kb on the left arm of yeast chromosome XII reveals six known genes, a new member of the seripauperins family and a new ABC transporter homologous to the human multidrug resistance protein.</title>
        <authorList>
            <person name="Purnelle B."/>
            <person name="Goffeau A."/>
        </authorList>
    </citation>
    <scope>NUCLEOTIDE SEQUENCE [GENOMIC DNA]</scope>
    <source>
        <strain>ATCC 204508 / S288c</strain>
    </source>
</reference>
<reference key="2">
    <citation type="journal article" date="1997" name="Nature">
        <title>The nucleotide sequence of Saccharomyces cerevisiae chromosome XII.</title>
        <authorList>
            <person name="Johnston M."/>
            <person name="Hillier L.W."/>
            <person name="Riles L."/>
            <person name="Albermann K."/>
            <person name="Andre B."/>
            <person name="Ansorge W."/>
            <person name="Benes V."/>
            <person name="Brueckner M."/>
            <person name="Delius H."/>
            <person name="Dubois E."/>
            <person name="Duesterhoeft A."/>
            <person name="Entian K.-D."/>
            <person name="Floeth M."/>
            <person name="Goffeau A."/>
            <person name="Hebling U."/>
            <person name="Heumann K."/>
            <person name="Heuss-Neitzel D."/>
            <person name="Hilbert H."/>
            <person name="Hilger F."/>
            <person name="Kleine K."/>
            <person name="Koetter P."/>
            <person name="Louis E.J."/>
            <person name="Messenguy F."/>
            <person name="Mewes H.-W."/>
            <person name="Miosga T."/>
            <person name="Moestl D."/>
            <person name="Mueller-Auer S."/>
            <person name="Nentwich U."/>
            <person name="Obermaier B."/>
            <person name="Piravandi E."/>
            <person name="Pohl T.M."/>
            <person name="Portetelle D."/>
            <person name="Purnelle B."/>
            <person name="Rechmann S."/>
            <person name="Rieger M."/>
            <person name="Rinke M."/>
            <person name="Rose M."/>
            <person name="Scharfe M."/>
            <person name="Scherens B."/>
            <person name="Scholler P."/>
            <person name="Schwager C."/>
            <person name="Schwarz S."/>
            <person name="Underwood A.P."/>
            <person name="Urrestarazu L.A."/>
            <person name="Vandenbol M."/>
            <person name="Verhasselt P."/>
            <person name="Vierendeels F."/>
            <person name="Voet M."/>
            <person name="Volckaert G."/>
            <person name="Voss H."/>
            <person name="Wambutt R."/>
            <person name="Wedler E."/>
            <person name="Wedler H."/>
            <person name="Zimmermann F.K."/>
            <person name="Zollner A."/>
            <person name="Hani J."/>
            <person name="Hoheisel J.D."/>
        </authorList>
    </citation>
    <scope>NUCLEOTIDE SEQUENCE [LARGE SCALE GENOMIC DNA]</scope>
    <source>
        <strain>ATCC 204508 / S288c</strain>
    </source>
</reference>
<reference key="3">
    <citation type="journal article" date="2014" name="G3 (Bethesda)">
        <title>The reference genome sequence of Saccharomyces cerevisiae: Then and now.</title>
        <authorList>
            <person name="Engel S.R."/>
            <person name="Dietrich F.S."/>
            <person name="Fisk D.G."/>
            <person name="Binkley G."/>
            <person name="Balakrishnan R."/>
            <person name="Costanzo M.C."/>
            <person name="Dwight S.S."/>
            <person name="Hitz B.C."/>
            <person name="Karra K."/>
            <person name="Nash R.S."/>
            <person name="Weng S."/>
            <person name="Wong E.D."/>
            <person name="Lloyd P."/>
            <person name="Skrzypek M.S."/>
            <person name="Miyasato S.R."/>
            <person name="Simison M."/>
            <person name="Cherry J.M."/>
        </authorList>
    </citation>
    <scope>GENOME REANNOTATION</scope>
    <source>
        <strain>ATCC 204508 / S288c</strain>
    </source>
</reference>
<reference key="4">
    <citation type="journal article" date="2003" name="Nature">
        <title>Global analysis of protein localization in budding yeast.</title>
        <authorList>
            <person name="Huh W.-K."/>
            <person name="Falvo J.V."/>
            <person name="Gerke L.C."/>
            <person name="Carroll A.S."/>
            <person name="Howson R.W."/>
            <person name="Weissman J.S."/>
            <person name="O'Shea E.K."/>
        </authorList>
    </citation>
    <scope>SUBCELLULAR LOCATION [LARGE SCALE ANALYSIS]</scope>
</reference>
<reference key="5">
    <citation type="journal article" date="2003" name="Nature">
        <title>Global analysis of protein expression in yeast.</title>
        <authorList>
            <person name="Ghaemmaghami S."/>
            <person name="Huh W.-K."/>
            <person name="Bower K."/>
            <person name="Howson R.W."/>
            <person name="Belle A."/>
            <person name="Dephoure N."/>
            <person name="O'Shea E.K."/>
            <person name="Weissman J.S."/>
        </authorList>
    </citation>
    <scope>LEVEL OF PROTEIN EXPRESSION [LARGE SCALE ANALYSIS]</scope>
</reference>
<reference key="6">
    <citation type="journal article" date="2006" name="Proc. Natl. Acad. Sci. U.S.A.">
        <title>A global topology map of the Saccharomyces cerevisiae membrane proteome.</title>
        <authorList>
            <person name="Kim H."/>
            <person name="Melen K."/>
            <person name="Oesterberg M."/>
            <person name="von Heijne G."/>
        </authorList>
    </citation>
    <scope>TOPOLOGY [LARGE SCALE ANALYSIS]</scope>
    <source>
        <strain>ATCC 208353 / W303-1A</strain>
    </source>
</reference>
<reference key="7">
    <citation type="journal article" date="2010" name="J. Cell Biol.">
        <title>Pom33, a novel transmembrane nucleoporin required for proper nuclear pore complex distribution.</title>
        <authorList>
            <person name="Chadrin A."/>
            <person name="Hess B."/>
            <person name="San Roman M."/>
            <person name="Gatti X."/>
            <person name="Lombard B."/>
            <person name="Loew D."/>
            <person name="Barral Y."/>
            <person name="Palancade B."/>
            <person name="Doye V."/>
        </authorList>
    </citation>
    <scope>SUBCELLULAR LOCATION</scope>
    <scope>INTERACTION WITH RTN1</scope>
    <scope>FUNCTION</scope>
</reference>
<dbReference type="EMBL" id="X97560">
    <property type="protein sequence ID" value="CAA66168.1"/>
    <property type="molecule type" value="Genomic_DNA"/>
</dbReference>
<dbReference type="EMBL" id="Z73128">
    <property type="protein sequence ID" value="CAA97471.1"/>
    <property type="molecule type" value="Genomic_DNA"/>
</dbReference>
<dbReference type="EMBL" id="BK006945">
    <property type="protein sequence ID" value="DAA09297.1"/>
    <property type="molecule type" value="Genomic_DNA"/>
</dbReference>
<dbReference type="PIR" id="S64771">
    <property type="entry name" value="S64771"/>
</dbReference>
<dbReference type="RefSeq" id="NP_013077.1">
    <property type="nucleotide sequence ID" value="NM_001181843.1"/>
</dbReference>
<dbReference type="BioGRID" id="31230">
    <property type="interactions" value="271"/>
</dbReference>
<dbReference type="DIP" id="DIP-4749N"/>
<dbReference type="FunCoup" id="Q12164">
    <property type="interactions" value="224"/>
</dbReference>
<dbReference type="IntAct" id="Q12164">
    <property type="interactions" value="5"/>
</dbReference>
<dbReference type="MINT" id="Q12164"/>
<dbReference type="STRING" id="4932.YLL023C"/>
<dbReference type="iPTMnet" id="Q12164"/>
<dbReference type="PaxDb" id="4932-YLL023C"/>
<dbReference type="PeptideAtlas" id="Q12164"/>
<dbReference type="EnsemblFungi" id="YLL023C_mRNA">
    <property type="protein sequence ID" value="YLL023C"/>
    <property type="gene ID" value="YLL023C"/>
</dbReference>
<dbReference type="GeneID" id="850637"/>
<dbReference type="KEGG" id="sce:YLL023C"/>
<dbReference type="AGR" id="SGD:S000003946"/>
<dbReference type="SGD" id="S000003946">
    <property type="gene designation" value="POM33"/>
</dbReference>
<dbReference type="VEuPathDB" id="FungiDB:YLL023C"/>
<dbReference type="eggNOG" id="KOG4002">
    <property type="taxonomic scope" value="Eukaryota"/>
</dbReference>
<dbReference type="GeneTree" id="ENSGT00390000011368"/>
<dbReference type="HOGENOM" id="CLU_065417_2_0_1"/>
<dbReference type="InParanoid" id="Q12164"/>
<dbReference type="OMA" id="NVQYLIM"/>
<dbReference type="OrthoDB" id="5581259at2759"/>
<dbReference type="BioCyc" id="YEAST:G3O-32127-MONOMER"/>
<dbReference type="BioGRID-ORCS" id="850637">
    <property type="hits" value="3 hits in 10 CRISPR screens"/>
</dbReference>
<dbReference type="PRO" id="PR:Q12164"/>
<dbReference type="Proteomes" id="UP000002311">
    <property type="component" value="Chromosome XII"/>
</dbReference>
<dbReference type="RNAct" id="Q12164">
    <property type="molecule type" value="protein"/>
</dbReference>
<dbReference type="GO" id="GO:0005783">
    <property type="term" value="C:endoplasmic reticulum"/>
    <property type="evidence" value="ECO:0000314"/>
    <property type="project" value="SGD"/>
</dbReference>
<dbReference type="GO" id="GO:0005789">
    <property type="term" value="C:endoplasmic reticulum membrane"/>
    <property type="evidence" value="ECO:0007669"/>
    <property type="project" value="UniProtKB-SubCell"/>
</dbReference>
<dbReference type="GO" id="GO:0005635">
    <property type="term" value="C:nuclear envelope"/>
    <property type="evidence" value="ECO:0000314"/>
    <property type="project" value="SGD"/>
</dbReference>
<dbReference type="GO" id="GO:0005640">
    <property type="term" value="C:nuclear outer membrane"/>
    <property type="evidence" value="ECO:0000255"/>
    <property type="project" value="SGD"/>
</dbReference>
<dbReference type="GO" id="GO:0005643">
    <property type="term" value="C:nuclear pore"/>
    <property type="evidence" value="ECO:0000314"/>
    <property type="project" value="SGD"/>
</dbReference>
<dbReference type="GO" id="GO:0071786">
    <property type="term" value="P:endoplasmic reticulum tubular network organization"/>
    <property type="evidence" value="ECO:0000318"/>
    <property type="project" value="GO_Central"/>
</dbReference>
<dbReference type="GO" id="GO:0061024">
    <property type="term" value="P:membrane organization"/>
    <property type="evidence" value="ECO:0000318"/>
    <property type="project" value="GO_Central"/>
</dbReference>
<dbReference type="GO" id="GO:0051028">
    <property type="term" value="P:mRNA transport"/>
    <property type="evidence" value="ECO:0007669"/>
    <property type="project" value="UniProtKB-KW"/>
</dbReference>
<dbReference type="GO" id="GO:0051664">
    <property type="term" value="P:nuclear pore localization"/>
    <property type="evidence" value="ECO:0000315"/>
    <property type="project" value="SGD"/>
</dbReference>
<dbReference type="GO" id="GO:0006999">
    <property type="term" value="P:nuclear pore organization"/>
    <property type="evidence" value="ECO:0000315"/>
    <property type="project" value="SGD"/>
</dbReference>
<dbReference type="GO" id="GO:0015031">
    <property type="term" value="P:protein transport"/>
    <property type="evidence" value="ECO:0007669"/>
    <property type="project" value="UniProtKB-KW"/>
</dbReference>
<dbReference type="InterPro" id="IPR051645">
    <property type="entry name" value="PER33/POM33_regulator"/>
</dbReference>
<dbReference type="InterPro" id="IPR005344">
    <property type="entry name" value="TMEM33/Pom33"/>
</dbReference>
<dbReference type="PANTHER" id="PTHR12703:SF6">
    <property type="entry name" value="PORE MEMBRANE PROTEIN OF 33 KDA"/>
    <property type="match status" value="1"/>
</dbReference>
<dbReference type="PANTHER" id="PTHR12703">
    <property type="entry name" value="TRANSMEMBRANE PROTEIN 33"/>
    <property type="match status" value="1"/>
</dbReference>
<dbReference type="Pfam" id="PF03661">
    <property type="entry name" value="TMEM33_Pom33"/>
    <property type="match status" value="1"/>
</dbReference>